<accession>S0ELJ9</accession>
<gene>
    <name evidence="7" type="primary">FUS4</name>
    <name type="ORF">FFUJ_10055</name>
</gene>
<name>FUS4_GIBF5</name>
<evidence type="ECO:0000250" key="1">
    <source>
        <dbReference type="UniProtKB" id="D4ATH2"/>
    </source>
</evidence>
<evidence type="ECO:0000255" key="2"/>
<evidence type="ECO:0000255" key="3">
    <source>
        <dbReference type="PROSITE-ProRule" id="PRU00498"/>
    </source>
</evidence>
<evidence type="ECO:0000255" key="4">
    <source>
        <dbReference type="PROSITE-ProRule" id="PRU01103"/>
    </source>
</evidence>
<evidence type="ECO:0000269" key="5">
    <source>
    </source>
</evidence>
<evidence type="ECO:0000269" key="6">
    <source>
    </source>
</evidence>
<evidence type="ECO:0000303" key="7">
    <source>
    </source>
</evidence>
<evidence type="ECO:0000305" key="8"/>
<dbReference type="EC" id="3.4.23.-" evidence="8"/>
<dbReference type="EMBL" id="HF679031">
    <property type="protein sequence ID" value="CCT73263.1"/>
    <property type="molecule type" value="Genomic_DNA"/>
</dbReference>
<dbReference type="SMR" id="S0ELJ9"/>
<dbReference type="STRING" id="1279085.S0ELJ9"/>
<dbReference type="GlyCosmos" id="S0ELJ9">
    <property type="glycosylation" value="4 sites, No reported glycans"/>
</dbReference>
<dbReference type="EnsemblFungi" id="CCT73263">
    <property type="protein sequence ID" value="CCT73263"/>
    <property type="gene ID" value="FFUJ_10055"/>
</dbReference>
<dbReference type="VEuPathDB" id="FungiDB:FFUJ_10055"/>
<dbReference type="HOGENOM" id="CLU_039077_0_0_1"/>
<dbReference type="Proteomes" id="UP000016800">
    <property type="component" value="Chromosome 9"/>
</dbReference>
<dbReference type="GO" id="GO:0005576">
    <property type="term" value="C:extracellular region"/>
    <property type="evidence" value="ECO:0007669"/>
    <property type="project" value="UniProtKB-SubCell"/>
</dbReference>
<dbReference type="GO" id="GO:0004190">
    <property type="term" value="F:aspartic-type endopeptidase activity"/>
    <property type="evidence" value="ECO:0007669"/>
    <property type="project" value="UniProtKB-KW"/>
</dbReference>
<dbReference type="GO" id="GO:0006508">
    <property type="term" value="P:proteolysis"/>
    <property type="evidence" value="ECO:0007669"/>
    <property type="project" value="UniProtKB-KW"/>
</dbReference>
<dbReference type="Gene3D" id="2.40.70.10">
    <property type="entry name" value="Acid Proteases"/>
    <property type="match status" value="2"/>
</dbReference>
<dbReference type="InterPro" id="IPR001461">
    <property type="entry name" value="Aspartic_peptidase_A1"/>
</dbReference>
<dbReference type="InterPro" id="IPR033121">
    <property type="entry name" value="PEPTIDASE_A1"/>
</dbReference>
<dbReference type="InterPro" id="IPR021109">
    <property type="entry name" value="Peptidase_aspartic_dom_sf"/>
</dbReference>
<dbReference type="PANTHER" id="PTHR47966">
    <property type="entry name" value="BETA-SITE APP-CLEAVING ENZYME, ISOFORM A-RELATED"/>
    <property type="match status" value="1"/>
</dbReference>
<dbReference type="PANTHER" id="PTHR47966:SF51">
    <property type="entry name" value="BETA-SITE APP-CLEAVING ENZYME, ISOFORM A-RELATED"/>
    <property type="match status" value="1"/>
</dbReference>
<dbReference type="Pfam" id="PF00026">
    <property type="entry name" value="Asp"/>
    <property type="match status" value="1"/>
</dbReference>
<dbReference type="PRINTS" id="PR00792">
    <property type="entry name" value="PEPSIN"/>
</dbReference>
<dbReference type="SUPFAM" id="SSF50630">
    <property type="entry name" value="Acid proteases"/>
    <property type="match status" value="1"/>
</dbReference>
<dbReference type="PROSITE" id="PS51767">
    <property type="entry name" value="PEPTIDASE_A1"/>
    <property type="match status" value="1"/>
</dbReference>
<reference key="1">
    <citation type="journal article" date="2013" name="PLoS Pathog.">
        <title>Deciphering the cryptic genome: genome-wide analyses of the rice pathogen Fusarium fujikuroi reveal complex regulation of secondary metabolism and novel metabolites.</title>
        <authorList>
            <person name="Wiemann P."/>
            <person name="Sieber C.M.K."/>
            <person name="von Bargen K.W."/>
            <person name="Studt L."/>
            <person name="Niehaus E.-M."/>
            <person name="Espino J.J."/>
            <person name="Huss K."/>
            <person name="Michielse C.B."/>
            <person name="Albermann S."/>
            <person name="Wagner D."/>
            <person name="Bergner S.V."/>
            <person name="Connolly L.R."/>
            <person name="Fischer A."/>
            <person name="Reuter G."/>
            <person name="Kleigrewe K."/>
            <person name="Bald T."/>
            <person name="Wingfield B.D."/>
            <person name="Ophir R."/>
            <person name="Freeman S."/>
            <person name="Hippler M."/>
            <person name="Smith K.M."/>
            <person name="Brown D.W."/>
            <person name="Proctor R.H."/>
            <person name="Muensterkoetter M."/>
            <person name="Freitag M."/>
            <person name="Humpf H.-U."/>
            <person name="Gueldener U."/>
            <person name="Tudzynski B."/>
        </authorList>
    </citation>
    <scope>NUCLEOTIDE SEQUENCE [LARGE SCALE GENOMIC DNA]</scope>
    <source>
        <strain>CBS 195.34 / IMI 58289 / NRRL A-6831</strain>
    </source>
</reference>
<reference key="2">
    <citation type="journal article" date="2010" name="Mol. Microbiol.">
        <title>FfVel1 and FfLae1, components of a velvet-like complex in Fusarium fujikuroi, affect differentiation, secondary metabolism and virulence.</title>
        <authorList>
            <person name="Wiemann P."/>
            <person name="Brown D.W."/>
            <person name="Kleigrewe K."/>
            <person name="Bok J.W."/>
            <person name="Keller N.P."/>
            <person name="Humpf H.U."/>
            <person name="Tudzynski B."/>
        </authorList>
    </citation>
    <scope>INDUCTION</scope>
</reference>
<reference key="3">
    <citation type="journal article" date="2013" name="Chem. Biol.">
        <title>Genetic manipulation of the Fusarium fujikuroi fusarin gene cluster yields insight into the complex regulation and fusarin biosynthetic pathway.</title>
        <authorList>
            <person name="Niehaus E.M."/>
            <person name="Kleigrewe K."/>
            <person name="Wiemann P."/>
            <person name="Studt L."/>
            <person name="Sieber C.M."/>
            <person name="Connolly L.R."/>
            <person name="Freitag M."/>
            <person name="Gueldener U."/>
            <person name="Tudzynski B."/>
            <person name="Humpf H.U."/>
        </authorList>
    </citation>
    <scope>FUNCTION</scope>
    <scope>INDUCTION</scope>
    <scope>DISRUPTION PHENOTYPE</scope>
</reference>
<protein>
    <recommendedName>
        <fullName evidence="7">Secreted aspartic protease FUS4</fullName>
        <ecNumber evidence="8">3.4.23.-</ecNumber>
    </recommendedName>
    <alternativeName>
        <fullName evidence="7">Fusarin biosynthesis protein 4</fullName>
    </alternativeName>
</protein>
<comment type="function">
    <text evidence="6">Secreted aspartic protease; part of the gene cluster that mediates the biosynthesis of the mycotoxin fusarin C (PubMed:23932525). Within the cluster, FUS1, FUS2, FUS8 and FUS9 are sufficient for fusarin production (PubMed:23932525). The other FUS cluster members are not essential for fusarin C biosynthesis (PubMed:23932525).</text>
</comment>
<comment type="subcellular location">
    <subcellularLocation>
        <location evidence="1">Secreted</location>
    </subcellularLocation>
</comment>
<comment type="induction">
    <text evidence="5 6">Expressed under high amounts of nitrogen via regulation by GLN1 (PubMed:23932525). Moreover, components of the fungal-specific velvet complex VEL1, VEL2 and LAE1 act also as positive regulators of expression (PubMed:20572938, PubMed:23932525). Finally, expression is induced under acidic conditions in a PACC-independent manner (PubMed:23932525).</text>
</comment>
<comment type="disruption phenotype">
    <text evidence="6">Does not alter fusarin C production (PubMed:23932525).</text>
</comment>
<comment type="similarity">
    <text evidence="4">Belongs to the peptidase A1 family.</text>
</comment>
<organism>
    <name type="scientific">Gibberella fujikuroi (strain CBS 195.34 / IMI 58289 / NRRL A-6831)</name>
    <name type="common">Bakanae and foot rot disease fungus</name>
    <name type="synonym">Fusarium fujikuroi</name>
    <dbReference type="NCBI Taxonomy" id="1279085"/>
    <lineage>
        <taxon>Eukaryota</taxon>
        <taxon>Fungi</taxon>
        <taxon>Dikarya</taxon>
        <taxon>Ascomycota</taxon>
        <taxon>Pezizomycotina</taxon>
        <taxon>Sordariomycetes</taxon>
        <taxon>Hypocreomycetidae</taxon>
        <taxon>Hypocreales</taxon>
        <taxon>Nectriaceae</taxon>
        <taxon>Fusarium</taxon>
        <taxon>Fusarium fujikuroi species complex</taxon>
    </lineage>
</organism>
<proteinExistence type="evidence at transcript level"/>
<sequence>MLAIATLHVALQVFGAFSLSHAAAVTLEHRSAGNSNIAAIPAKWDVYGYLFNVTVGSPPQNITMLSDMTWMAPFVRSGRCLSQFNPELCVAQGQSFFNEHDSTTFGNTTFAQATWPVTAFAPNFTVDYGRDKFCIGNICNKDILMQVSDFPYPGSVVPVIPFGGIFGLAPTPKTITETSEPVNFQAWKNGNMGPLVGWHTCEVLKSAASCQGGDAQLVFGGTDTTMYSAKKIQSYEIQNPEWLSDAFYPSTPPRSNYWTVVDEGSEGLGAPLSLNGYKYLVRHIKSAKLASKAIVQNIQQQGSSGYNTANQDWYTVSCDGLDEFPNLVYQLDGRKKYTISPGDYVTKLTDMPGSVCYLNVNVWKYGRTENGDARVVLLGKAFLKRKYLVLNFEERSFGLAPLLTG</sequence>
<feature type="signal peptide" evidence="2">
    <location>
        <begin position="1"/>
        <end position="24"/>
    </location>
</feature>
<feature type="chain" id="PRO_5004496207" description="Secreted aspartic protease FUS4">
    <location>
        <begin position="25"/>
        <end position="405"/>
    </location>
</feature>
<feature type="domain" description="Peptidase A1" evidence="4">
    <location>
        <begin position="49"/>
        <end position="400"/>
    </location>
</feature>
<feature type="glycosylation site" description="N-linked (GlcNAc...) asparagine" evidence="3">
    <location>
        <position position="52"/>
    </location>
</feature>
<feature type="glycosylation site" description="N-linked (GlcNAc...) asparagine" evidence="3">
    <location>
        <position position="61"/>
    </location>
</feature>
<feature type="glycosylation site" description="N-linked (GlcNAc...) asparagine" evidence="3">
    <location>
        <position position="107"/>
    </location>
</feature>
<feature type="glycosylation site" description="N-linked (GlcNAc...) asparagine" evidence="3">
    <location>
        <position position="123"/>
    </location>
</feature>
<feature type="disulfide bond" evidence="4">
    <location>
        <begin position="318"/>
        <end position="356"/>
    </location>
</feature>
<keyword id="KW-0064">Aspartyl protease</keyword>
<keyword id="KW-1015">Disulfide bond</keyword>
<keyword id="KW-0325">Glycoprotein</keyword>
<keyword id="KW-0378">Hydrolase</keyword>
<keyword id="KW-0645">Protease</keyword>
<keyword id="KW-1185">Reference proteome</keyword>
<keyword id="KW-0964">Secreted</keyword>
<keyword id="KW-0732">Signal</keyword>